<sequence length="444" mass="48913">MKAREANFDGLVGPTHNYSGLSFGNVASEKNQANQSNPKQAAKQGLAKMKALADMGLVQGILAPQERPDVHTLRRLGFMGSDANVIEQAAKQAPKVLAACCSASSMWTANAATVSPSADTADGKVHFTPANLTNKFHRSIEHETTGRILQATFADKNHFAHHSALPAVEHFGDEGAANHTRFCHQYDEHGVEFFVYGRHAFDSRYPAPKKYPARHTFEACEAVVRLHQLTSDKVVIAQQNPDVIDQGVFHNDVIAVGNKNVLFCHEQAFLNQQAVYKELTAKVGGNFKIIEVPTSAITIEDAVTSYLFNSQLIEMPNGETLLILPEECRNNERVWAHVQTIINAKQGIDKVQIFDLKQSMANGGGPACLRLRVVLNEQELQAVNQSTLMNDTLFNRLNTWVDSHYRDTVTDADLADPQLVVESRAALDALTQILDLGSVYAFQR</sequence>
<keyword id="KW-0056">Arginine metabolism</keyword>
<keyword id="KW-0378">Hydrolase</keyword>
<keyword id="KW-1185">Reference proteome</keyword>
<accession>Q6LJR6</accession>
<gene>
    <name evidence="1" type="primary">astB</name>
    <name type="ordered locus">PBPRB0591</name>
</gene>
<feature type="chain" id="PRO_0000262361" description="N-succinylarginine dihydrolase">
    <location>
        <begin position="1"/>
        <end position="444"/>
    </location>
</feature>
<feature type="active site" evidence="1">
    <location>
        <position position="174"/>
    </location>
</feature>
<feature type="active site" evidence="1">
    <location>
        <position position="250"/>
    </location>
</feature>
<feature type="active site" description="Nucleophile" evidence="1">
    <location>
        <position position="368"/>
    </location>
</feature>
<feature type="binding site" evidence="1">
    <location>
        <begin position="19"/>
        <end position="28"/>
    </location>
    <ligand>
        <name>substrate</name>
    </ligand>
</feature>
<feature type="binding site" evidence="1">
    <location>
        <position position="110"/>
    </location>
    <ligand>
        <name>substrate</name>
    </ligand>
</feature>
<feature type="binding site" evidence="1">
    <location>
        <begin position="137"/>
        <end position="138"/>
    </location>
    <ligand>
        <name>substrate</name>
    </ligand>
</feature>
<feature type="binding site" evidence="1">
    <location>
        <position position="214"/>
    </location>
    <ligand>
        <name>substrate</name>
    </ligand>
</feature>
<feature type="binding site" evidence="1">
    <location>
        <position position="252"/>
    </location>
    <ligand>
        <name>substrate</name>
    </ligand>
</feature>
<feature type="binding site" evidence="1">
    <location>
        <position position="362"/>
    </location>
    <ligand>
        <name>substrate</name>
    </ligand>
</feature>
<name>ASTB_PHOPR</name>
<evidence type="ECO:0000255" key="1">
    <source>
        <dbReference type="HAMAP-Rule" id="MF_01172"/>
    </source>
</evidence>
<protein>
    <recommendedName>
        <fullName evidence="1">N-succinylarginine dihydrolase</fullName>
        <ecNumber evidence="1">3.5.3.23</ecNumber>
    </recommendedName>
</protein>
<comment type="function">
    <text evidence="1">Catalyzes the hydrolysis of N(2)-succinylarginine into N(2)-succinylornithine, ammonia and CO(2).</text>
</comment>
<comment type="catalytic activity">
    <reaction evidence="1">
        <text>N(2)-succinyl-L-arginine + 2 H2O + 2 H(+) = N(2)-succinyl-L-ornithine + 2 NH4(+) + CO2</text>
        <dbReference type="Rhea" id="RHEA:19533"/>
        <dbReference type="ChEBI" id="CHEBI:15377"/>
        <dbReference type="ChEBI" id="CHEBI:15378"/>
        <dbReference type="ChEBI" id="CHEBI:16526"/>
        <dbReference type="ChEBI" id="CHEBI:28938"/>
        <dbReference type="ChEBI" id="CHEBI:58241"/>
        <dbReference type="ChEBI" id="CHEBI:58514"/>
        <dbReference type="EC" id="3.5.3.23"/>
    </reaction>
</comment>
<comment type="pathway">
    <text evidence="1">Amino-acid degradation; L-arginine degradation via AST pathway; L-glutamate and succinate from L-arginine: step 2/5.</text>
</comment>
<comment type="subunit">
    <text evidence="1">Homodimer.</text>
</comment>
<comment type="similarity">
    <text evidence="1">Belongs to the succinylarginine dihydrolase family.</text>
</comment>
<organism>
    <name type="scientific">Photobacterium profundum (strain SS9)</name>
    <dbReference type="NCBI Taxonomy" id="298386"/>
    <lineage>
        <taxon>Bacteria</taxon>
        <taxon>Pseudomonadati</taxon>
        <taxon>Pseudomonadota</taxon>
        <taxon>Gammaproteobacteria</taxon>
        <taxon>Vibrionales</taxon>
        <taxon>Vibrionaceae</taxon>
        <taxon>Photobacterium</taxon>
    </lineage>
</organism>
<reference key="1">
    <citation type="journal article" date="2005" name="Science">
        <title>Life at depth: Photobacterium profundum genome sequence and expression analysis.</title>
        <authorList>
            <person name="Vezzi A."/>
            <person name="Campanaro S."/>
            <person name="D'Angelo M."/>
            <person name="Simonato F."/>
            <person name="Vitulo N."/>
            <person name="Lauro F.M."/>
            <person name="Cestaro A."/>
            <person name="Malacrida G."/>
            <person name="Simionati B."/>
            <person name="Cannata N."/>
            <person name="Romualdi C."/>
            <person name="Bartlett D.H."/>
            <person name="Valle G."/>
        </authorList>
    </citation>
    <scope>NUCLEOTIDE SEQUENCE [LARGE SCALE GENOMIC DNA]</scope>
    <source>
        <strain>ATCC BAA-1253 / SS9</strain>
    </source>
</reference>
<proteinExistence type="inferred from homology"/>
<dbReference type="EC" id="3.5.3.23" evidence="1"/>
<dbReference type="EMBL" id="CR378677">
    <property type="protein sequence ID" value="CAG22464.1"/>
    <property type="molecule type" value="Genomic_DNA"/>
</dbReference>
<dbReference type="RefSeq" id="WP_011220682.1">
    <property type="nucleotide sequence ID" value="NC_006371.1"/>
</dbReference>
<dbReference type="SMR" id="Q6LJR6"/>
<dbReference type="STRING" id="298386.PBPRB0591"/>
<dbReference type="KEGG" id="ppr:PBPRB0591"/>
<dbReference type="eggNOG" id="COG3724">
    <property type="taxonomic scope" value="Bacteria"/>
</dbReference>
<dbReference type="HOGENOM" id="CLU_053835_0_0_6"/>
<dbReference type="UniPathway" id="UPA00185">
    <property type="reaction ID" value="UER00280"/>
</dbReference>
<dbReference type="Proteomes" id="UP000000593">
    <property type="component" value="Chromosome 2"/>
</dbReference>
<dbReference type="GO" id="GO:0009015">
    <property type="term" value="F:N-succinylarginine dihydrolase activity"/>
    <property type="evidence" value="ECO:0007669"/>
    <property type="project" value="UniProtKB-UniRule"/>
</dbReference>
<dbReference type="GO" id="GO:0019544">
    <property type="term" value="P:arginine catabolic process to glutamate"/>
    <property type="evidence" value="ECO:0007669"/>
    <property type="project" value="UniProtKB-UniRule"/>
</dbReference>
<dbReference type="GO" id="GO:0019545">
    <property type="term" value="P:arginine catabolic process to succinate"/>
    <property type="evidence" value="ECO:0007669"/>
    <property type="project" value="UniProtKB-UniRule"/>
</dbReference>
<dbReference type="Gene3D" id="3.75.10.20">
    <property type="entry name" value="Succinylarginine dihydrolase"/>
    <property type="match status" value="1"/>
</dbReference>
<dbReference type="HAMAP" id="MF_01172">
    <property type="entry name" value="AstB"/>
    <property type="match status" value="1"/>
</dbReference>
<dbReference type="InterPro" id="IPR037031">
    <property type="entry name" value="AstB_sf"/>
</dbReference>
<dbReference type="InterPro" id="IPR007079">
    <property type="entry name" value="SuccinylArg_d-Hdrlase_AstB"/>
</dbReference>
<dbReference type="NCBIfam" id="TIGR03241">
    <property type="entry name" value="arg_catab_astB"/>
    <property type="match status" value="1"/>
</dbReference>
<dbReference type="NCBIfam" id="NF009789">
    <property type="entry name" value="PRK13281.1"/>
    <property type="match status" value="1"/>
</dbReference>
<dbReference type="PANTHER" id="PTHR30420">
    <property type="entry name" value="N-SUCCINYLARGININE DIHYDROLASE"/>
    <property type="match status" value="1"/>
</dbReference>
<dbReference type="PANTHER" id="PTHR30420:SF2">
    <property type="entry name" value="N-SUCCINYLARGININE DIHYDROLASE"/>
    <property type="match status" value="1"/>
</dbReference>
<dbReference type="Pfam" id="PF04996">
    <property type="entry name" value="AstB"/>
    <property type="match status" value="1"/>
</dbReference>
<dbReference type="SUPFAM" id="SSF55909">
    <property type="entry name" value="Pentein"/>
    <property type="match status" value="1"/>
</dbReference>